<proteinExistence type="inferred from homology"/>
<comment type="catalytic activity">
    <reaction evidence="1">
        <text>(S)-4-hydroxy-2-oxopentanoate = acetaldehyde + pyruvate</text>
        <dbReference type="Rhea" id="RHEA:22624"/>
        <dbReference type="ChEBI" id="CHEBI:15343"/>
        <dbReference type="ChEBI" id="CHEBI:15361"/>
        <dbReference type="ChEBI" id="CHEBI:73143"/>
        <dbReference type="EC" id="4.1.3.39"/>
    </reaction>
</comment>
<comment type="similarity">
    <text evidence="1">Belongs to the 4-hydroxy-2-oxovalerate aldolase family.</text>
</comment>
<name>HOA3_NOCFA</name>
<organism>
    <name type="scientific">Nocardia farcinica (strain IFM 10152)</name>
    <dbReference type="NCBI Taxonomy" id="247156"/>
    <lineage>
        <taxon>Bacteria</taxon>
        <taxon>Bacillati</taxon>
        <taxon>Actinomycetota</taxon>
        <taxon>Actinomycetes</taxon>
        <taxon>Mycobacteriales</taxon>
        <taxon>Nocardiaceae</taxon>
        <taxon>Nocardia</taxon>
    </lineage>
</organism>
<evidence type="ECO:0000255" key="1">
    <source>
        <dbReference type="HAMAP-Rule" id="MF_01656"/>
    </source>
</evidence>
<sequence length="338" mass="36282">MTTRLFIQDVTLRDGMHAVRHRITPEDVGRIVAALDAAGVDAIEVAHGDGLAGGSLNYGPGSNTDWEWIEAAADNLTHARLTTLLLPGIGTIAHLEQAYRLGVRSVRIATHCTEADVSAQHIATARELGMDVSGFLMMSHMAEAEQLAEQAELMESYGAHCVYVTDSGGRLTMDGVRDRVRAYRRVLDPATEIGIHAHENLSLAVANSVVAVEEGVTRVDASLAGHGAGAGNCPIEPFVAVADLYGWKHSCDLFALQDAADDLVRPLQDRPVRVDRETLTLGYAGVYSSFLRHAEAAARRYGLDTRTILLEVGRRGLVGGQEDLIVDIALDLLADTTA</sequence>
<gene>
    <name type="ordered locus">NFA_33200</name>
</gene>
<protein>
    <recommendedName>
        <fullName evidence="1">4-hydroxy-2-oxovalerate aldolase 3</fullName>
        <shortName evidence="1">HOA 3</shortName>
        <ecNumber evidence="1">4.1.3.39</ecNumber>
    </recommendedName>
    <alternativeName>
        <fullName evidence="1">4-hydroxy-2-keto-pentanoic acid aldolase 3</fullName>
    </alternativeName>
    <alternativeName>
        <fullName evidence="1">4-hydroxy-2-oxopentanoate aldolase 3</fullName>
    </alternativeName>
</protein>
<accession>Q5YUH4</accession>
<feature type="chain" id="PRO_0000387869" description="4-hydroxy-2-oxovalerate aldolase 3">
    <location>
        <begin position="1"/>
        <end position="338"/>
    </location>
</feature>
<feature type="domain" description="Pyruvate carboxyltransferase" evidence="1">
    <location>
        <begin position="5"/>
        <end position="257"/>
    </location>
</feature>
<feature type="active site" description="Proton acceptor" evidence="1">
    <location>
        <position position="17"/>
    </location>
</feature>
<feature type="binding site" evidence="1">
    <location>
        <begin position="13"/>
        <end position="14"/>
    </location>
    <ligand>
        <name>substrate</name>
    </ligand>
</feature>
<feature type="binding site" evidence="1">
    <location>
        <position position="14"/>
    </location>
    <ligand>
        <name>Mn(2+)</name>
        <dbReference type="ChEBI" id="CHEBI:29035"/>
    </ligand>
</feature>
<feature type="binding site" evidence="1">
    <location>
        <position position="167"/>
    </location>
    <ligand>
        <name>substrate</name>
    </ligand>
</feature>
<feature type="binding site" evidence="1">
    <location>
        <position position="196"/>
    </location>
    <ligand>
        <name>Mn(2+)</name>
        <dbReference type="ChEBI" id="CHEBI:29035"/>
    </ligand>
</feature>
<feature type="binding site" evidence="1">
    <location>
        <position position="196"/>
    </location>
    <ligand>
        <name>substrate</name>
    </ligand>
</feature>
<feature type="binding site" evidence="1">
    <location>
        <position position="198"/>
    </location>
    <ligand>
        <name>Mn(2+)</name>
        <dbReference type="ChEBI" id="CHEBI:29035"/>
    </ligand>
</feature>
<feature type="binding site" evidence="1">
    <location>
        <position position="287"/>
    </location>
    <ligand>
        <name>substrate</name>
    </ligand>
</feature>
<feature type="site" description="Transition state stabilizer" evidence="1">
    <location>
        <position position="13"/>
    </location>
</feature>
<reference key="1">
    <citation type="journal article" date="2004" name="Proc. Natl. Acad. Sci. U.S.A.">
        <title>The complete genomic sequence of Nocardia farcinica IFM 10152.</title>
        <authorList>
            <person name="Ishikawa J."/>
            <person name="Yamashita A."/>
            <person name="Mikami Y."/>
            <person name="Hoshino Y."/>
            <person name="Kurita H."/>
            <person name="Hotta K."/>
            <person name="Shiba T."/>
            <person name="Hattori M."/>
        </authorList>
    </citation>
    <scope>NUCLEOTIDE SEQUENCE [LARGE SCALE GENOMIC DNA]</scope>
    <source>
        <strain>IFM 10152</strain>
    </source>
</reference>
<keyword id="KW-0058">Aromatic hydrocarbons catabolism</keyword>
<keyword id="KW-0456">Lyase</keyword>
<keyword id="KW-0464">Manganese</keyword>
<keyword id="KW-0479">Metal-binding</keyword>
<keyword id="KW-1185">Reference proteome</keyword>
<dbReference type="EC" id="4.1.3.39" evidence="1"/>
<dbReference type="EMBL" id="AP006618">
    <property type="protein sequence ID" value="BAD58167.1"/>
    <property type="molecule type" value="Genomic_DNA"/>
</dbReference>
<dbReference type="SMR" id="Q5YUH4"/>
<dbReference type="STRING" id="247156.NFA_33200"/>
<dbReference type="GeneID" id="61134030"/>
<dbReference type="KEGG" id="nfa:NFA_33200"/>
<dbReference type="eggNOG" id="COG0119">
    <property type="taxonomic scope" value="Bacteria"/>
</dbReference>
<dbReference type="HOGENOM" id="CLU_049173_0_0_11"/>
<dbReference type="OrthoDB" id="9803573at2"/>
<dbReference type="Proteomes" id="UP000006820">
    <property type="component" value="Chromosome"/>
</dbReference>
<dbReference type="GO" id="GO:0003852">
    <property type="term" value="F:2-isopropylmalate synthase activity"/>
    <property type="evidence" value="ECO:0007669"/>
    <property type="project" value="TreeGrafter"/>
</dbReference>
<dbReference type="GO" id="GO:0008701">
    <property type="term" value="F:4-hydroxy-2-oxovalerate aldolase activity"/>
    <property type="evidence" value="ECO:0007669"/>
    <property type="project" value="UniProtKB-UniRule"/>
</dbReference>
<dbReference type="GO" id="GO:0030145">
    <property type="term" value="F:manganese ion binding"/>
    <property type="evidence" value="ECO:0007669"/>
    <property type="project" value="UniProtKB-UniRule"/>
</dbReference>
<dbReference type="GO" id="GO:0009056">
    <property type="term" value="P:catabolic process"/>
    <property type="evidence" value="ECO:0007669"/>
    <property type="project" value="UniProtKB-KW"/>
</dbReference>
<dbReference type="GO" id="GO:0009098">
    <property type="term" value="P:L-leucine biosynthetic process"/>
    <property type="evidence" value="ECO:0007669"/>
    <property type="project" value="TreeGrafter"/>
</dbReference>
<dbReference type="CDD" id="cd07943">
    <property type="entry name" value="DRE_TIM_HOA"/>
    <property type="match status" value="1"/>
</dbReference>
<dbReference type="Gene3D" id="1.10.8.60">
    <property type="match status" value="1"/>
</dbReference>
<dbReference type="Gene3D" id="3.20.20.70">
    <property type="entry name" value="Aldolase class I"/>
    <property type="match status" value="1"/>
</dbReference>
<dbReference type="HAMAP" id="MF_01656">
    <property type="entry name" value="HOA"/>
    <property type="match status" value="1"/>
</dbReference>
<dbReference type="InterPro" id="IPR050073">
    <property type="entry name" value="2-IPM_HCS-like"/>
</dbReference>
<dbReference type="InterPro" id="IPR017629">
    <property type="entry name" value="4OH_2_O-val_aldolase"/>
</dbReference>
<dbReference type="InterPro" id="IPR013785">
    <property type="entry name" value="Aldolase_TIM"/>
</dbReference>
<dbReference type="InterPro" id="IPR012425">
    <property type="entry name" value="DmpG_comm"/>
</dbReference>
<dbReference type="InterPro" id="IPR035685">
    <property type="entry name" value="DRE_TIM_HOA"/>
</dbReference>
<dbReference type="InterPro" id="IPR000891">
    <property type="entry name" value="PYR_CT"/>
</dbReference>
<dbReference type="NCBIfam" id="TIGR03217">
    <property type="entry name" value="4OH_2_O_val_ald"/>
    <property type="match status" value="1"/>
</dbReference>
<dbReference type="NCBIfam" id="NF006049">
    <property type="entry name" value="PRK08195.1"/>
    <property type="match status" value="1"/>
</dbReference>
<dbReference type="PANTHER" id="PTHR10277:SF9">
    <property type="entry name" value="2-ISOPROPYLMALATE SYNTHASE 1, CHLOROPLASTIC-RELATED"/>
    <property type="match status" value="1"/>
</dbReference>
<dbReference type="PANTHER" id="PTHR10277">
    <property type="entry name" value="HOMOCITRATE SYNTHASE-RELATED"/>
    <property type="match status" value="1"/>
</dbReference>
<dbReference type="Pfam" id="PF07836">
    <property type="entry name" value="DmpG_comm"/>
    <property type="match status" value="1"/>
</dbReference>
<dbReference type="Pfam" id="PF00682">
    <property type="entry name" value="HMGL-like"/>
    <property type="match status" value="1"/>
</dbReference>
<dbReference type="SUPFAM" id="SSF51569">
    <property type="entry name" value="Aldolase"/>
    <property type="match status" value="1"/>
</dbReference>
<dbReference type="SUPFAM" id="SSF89000">
    <property type="entry name" value="post-HMGL domain-like"/>
    <property type="match status" value="1"/>
</dbReference>
<dbReference type="PROSITE" id="PS50991">
    <property type="entry name" value="PYR_CT"/>
    <property type="match status" value="1"/>
</dbReference>